<accession>Q9J562</accession>
<proteinExistence type="inferred from homology"/>
<evidence type="ECO:0000250" key="1"/>
<evidence type="ECO:0000305" key="2"/>
<reference key="1">
    <citation type="journal article" date="2000" name="J. Virol.">
        <title>The genome of fowlpox virus.</title>
        <authorList>
            <person name="Afonso C.L."/>
            <person name="Tulman E.R."/>
            <person name="Lu Z."/>
            <person name="Zsak L."/>
            <person name="Kutish G.F."/>
            <person name="Rock D.L."/>
        </authorList>
    </citation>
    <scope>NUCLEOTIDE SEQUENCE [LARGE SCALE GENOMIC DNA]</scope>
</reference>
<keyword id="KW-0010">Activator</keyword>
<keyword id="KW-0238">DNA-binding</keyword>
<keyword id="KW-1185">Reference proteome</keyword>
<keyword id="KW-0804">Transcription</keyword>
<keyword id="KW-0805">Transcription regulation</keyword>
<keyword id="KW-0946">Virion</keyword>
<dbReference type="EMBL" id="AF198100">
    <property type="protein sequence ID" value="AAF44515.1"/>
    <property type="molecule type" value="Genomic_DNA"/>
</dbReference>
<dbReference type="RefSeq" id="NP_039134.1">
    <property type="nucleotide sequence ID" value="NC_002188.1"/>
</dbReference>
<dbReference type="SMR" id="Q9J562"/>
<dbReference type="GeneID" id="1486719"/>
<dbReference type="KEGG" id="vg:1486719"/>
<dbReference type="Proteomes" id="UP000008597">
    <property type="component" value="Segment"/>
</dbReference>
<dbReference type="GO" id="GO:0044423">
    <property type="term" value="C:virion component"/>
    <property type="evidence" value="ECO:0007669"/>
    <property type="project" value="UniProtKB-KW"/>
</dbReference>
<dbReference type="GO" id="GO:0003677">
    <property type="term" value="F:DNA binding"/>
    <property type="evidence" value="ECO:0007669"/>
    <property type="project" value="UniProtKB-KW"/>
</dbReference>
<dbReference type="GO" id="GO:0045893">
    <property type="term" value="P:positive regulation of DNA-templated transcription"/>
    <property type="evidence" value="ECO:0007669"/>
    <property type="project" value="InterPro"/>
</dbReference>
<dbReference type="InterPro" id="IPR007532">
    <property type="entry name" value="Poxvirus_early-TF_lsu"/>
</dbReference>
<dbReference type="Pfam" id="PF04441">
    <property type="entry name" value="Pox_VERT_large"/>
    <property type="match status" value="1"/>
</dbReference>
<comment type="function">
    <text evidence="1">Acts with RNA polymerase to initiate transcription from early gene promoters. Is recruited by the RPO-associated protein of 94 kDa (RAP94) to form the early transcription complex, which also contains the core RNA polymerase. ETF heterodimer binds to early gene promoters (By similarity).</text>
</comment>
<comment type="subunit">
    <text evidence="1">Heterodimer of a 70 kDa and a 82 kDa subunit. Part of the early transcription complex composed of ETF, RAP94, and the DNA-directed RNA polymerase (By similarity).</text>
</comment>
<comment type="subcellular location">
    <subcellularLocation>
        <location evidence="1">Virion</location>
    </subcellularLocation>
    <text evidence="1">All the enzymes and other proteins required to synthesize early mRNAs are packaged within the virion core along with the DNA genome. This is necessary because viral early mRNAs are synthesized within minutes after virus entry into the cell and are extruded through pores in the core particle (By similarity).</text>
</comment>
<comment type="similarity">
    <text evidence="2">Belongs to the poxviridae VETF large subunit family.</text>
</comment>
<sequence length="709" mass="82730">MYVVNPQLVVLVDKDQEILDVLYLTLYDGIDERSSMYYFIKNHLRVPMDRVRVLKKHIILTLKISQVKGYICDLLNIDEEIIIYSHKNNLEYSYVDNTTFNPFTMTQRKTLLKSKSFLYNVYVDACNFLVIWVAKAADTMVKELGSYEEVDANVLKFESRLIEMFPDLDLDFTVESKFNNVFRTNLKMTGLKNIVLSNTDKKILFIKSDEYFINLSGNHFVINDESLNLSIWDDDGSLAISSDGNTITVNNVKLFTDMIPNNNVQMERIKSDITYKVKLSTPITSKVKLDIETSFIFIETATNNILLSVDKKISIILAKNHISIKVKNHIPNIEKYFTFLVVFINRLFNTVKQSMDFTKIETIYWSRICQNTKDKNRKPVIISSLEPDMLKVSDNFYKSPTKEVFVNNNEVMFTCDDKTGKYNNIGFLAIFYKLQKICIPCCFLKNQSHTDTFMACVHNKQTDKNIISPYILNYGKVVTDSKIAFLPPIFNDFFNSDLSISLESDNKRLKSTKGYHVIRSCLHNCRYYTLKRIRTKNDIIQFVNTENVTLIANDIVYFPMKYSSINNKIYILVQEIVHEIVIAKKEEDKDMIYFEELRTNKLRDMFPYKVKTVDIKEQNGLKLTTDGFYVDGELFTEPLSTKRSVFMDNISTQNNPIVKYFNSVFKYVVTDNKEIFIKTWVINTMLKLGIGKDYTHIQIKSILEKYYKL</sequence>
<protein>
    <recommendedName>
        <fullName>Early transcription factor 82 kDa subunit</fullName>
    </recommendedName>
    <alternativeName>
        <fullName>ETF large subunit</fullName>
    </alternativeName>
</protein>
<organismHost>
    <name type="scientific">Vertebrata</name>
    <dbReference type="NCBI Taxonomy" id="7742"/>
</organismHost>
<name>ETF2_FOWPN</name>
<feature type="chain" id="PRO_0000099084" description="Early transcription factor 82 kDa subunit">
    <location>
        <begin position="1"/>
        <end position="709"/>
    </location>
</feature>
<gene>
    <name type="primary">VETFL</name>
    <name type="ordered locus">FPV171</name>
</gene>
<organism>
    <name type="scientific">Fowlpox virus (strain NVSL)</name>
    <name type="common">FPV</name>
    <dbReference type="NCBI Taxonomy" id="928301"/>
    <lineage>
        <taxon>Viruses</taxon>
        <taxon>Varidnaviria</taxon>
        <taxon>Bamfordvirae</taxon>
        <taxon>Nucleocytoviricota</taxon>
        <taxon>Pokkesviricetes</taxon>
        <taxon>Chitovirales</taxon>
        <taxon>Poxviridae</taxon>
        <taxon>Chordopoxvirinae</taxon>
        <taxon>Avipoxvirus</taxon>
        <taxon>Fowlpox virus</taxon>
    </lineage>
</organism>